<dbReference type="EC" id="3.5.2.15" evidence="1 2 3"/>
<dbReference type="EMBL" id="AF086815">
    <property type="protein sequence ID" value="AAC61577.1"/>
    <property type="molecule type" value="Genomic_DNA"/>
</dbReference>
<dbReference type="SMR" id="P0A3V5"/>
<dbReference type="KEGG" id="ag:AAC61577"/>
<dbReference type="BioCyc" id="MetaCyc:MONOMER-12130"/>
<dbReference type="SABIO-RK" id="P0A3V5"/>
<dbReference type="UniPathway" id="UPA00008">
    <property type="reaction ID" value="UER00502"/>
</dbReference>
<dbReference type="GO" id="GO:0018753">
    <property type="term" value="F:cyanuric acid amidohydrolase activity"/>
    <property type="evidence" value="ECO:0007669"/>
    <property type="project" value="UniProtKB-UniRule"/>
</dbReference>
<dbReference type="GO" id="GO:0046872">
    <property type="term" value="F:metal ion binding"/>
    <property type="evidence" value="ECO:0007669"/>
    <property type="project" value="UniProtKB-UniRule"/>
</dbReference>
<dbReference type="GO" id="GO:0019381">
    <property type="term" value="P:atrazine catabolic process"/>
    <property type="evidence" value="ECO:0007669"/>
    <property type="project" value="UniProtKB-UniRule"/>
</dbReference>
<dbReference type="Gene3D" id="3.30.1330.160">
    <property type="entry name" value="Cyanuric acid hydrolase/Barbituras, RU C"/>
    <property type="match status" value="1"/>
</dbReference>
<dbReference type="Gene3D" id="3.30.1330.170">
    <property type="entry name" value="Cyanuric acid hydrolase/Barbiturase, RU A"/>
    <property type="match status" value="1"/>
</dbReference>
<dbReference type="Gene3D" id="3.30.1330.180">
    <property type="entry name" value="Cyanuric acid hydrolase/Barbiturase, RU B"/>
    <property type="match status" value="1"/>
</dbReference>
<dbReference type="HAMAP" id="MF_01989">
    <property type="entry name" value="Cyc_amidohydrol"/>
    <property type="match status" value="1"/>
</dbReference>
<dbReference type="InterPro" id="IPR014086">
    <property type="entry name" value="AtzD/Barbiturase"/>
</dbReference>
<dbReference type="InterPro" id="IPR043008">
    <property type="entry name" value="AtzD/Barbiturase_RUA"/>
</dbReference>
<dbReference type="InterPro" id="IPR043006">
    <property type="entry name" value="AtzD/Barbiturase_RUB"/>
</dbReference>
<dbReference type="InterPro" id="IPR043007">
    <property type="entry name" value="AtzD/Barbiturase_RUC"/>
</dbReference>
<dbReference type="NCBIfam" id="TIGR02714">
    <property type="entry name" value="amido_AtzD_TrzD"/>
    <property type="match status" value="1"/>
</dbReference>
<dbReference type="Pfam" id="PF09663">
    <property type="entry name" value="Amido_AtzD_TrzD"/>
    <property type="match status" value="1"/>
</dbReference>
<protein>
    <recommendedName>
        <fullName evidence="1">Cyanuric acid amidohydrolase</fullName>
        <shortName evidence="1">CAH</shortName>
        <ecNumber evidence="1 2 3">3.5.2.15</ecNumber>
    </recommendedName>
</protein>
<evidence type="ECO:0000255" key="1">
    <source>
        <dbReference type="HAMAP-Rule" id="MF_01989"/>
    </source>
</evidence>
<evidence type="ECO:0000269" key="2">
    <source>
    </source>
</evidence>
<evidence type="ECO:0000269" key="3">
    <source>
    </source>
</evidence>
<evidence type="ECO:0000305" key="4"/>
<evidence type="ECO:0000305" key="5">
    <source>
    </source>
</evidence>
<gene>
    <name type="primary">trzD</name>
</gene>
<comment type="function">
    <text evidence="1 2 3">Responsible for the hydrolysis of cyanuric acid, an intermediate formed during catabolism of s-triazine based compounds in herbicides such as atrazine and polymers such as melamine. Catalyzes the hydrolytic opening of the s-triazine ring of cyanuric acid (2,4,6-trihydroxy-s-triazine) to yield carbon dioxide and carboxybiuret, which spontaneously decarboxylates to biuret.</text>
</comment>
<comment type="catalytic activity">
    <reaction evidence="1 2 3">
        <text>cyanurate + H2O = 1-carboxybiuret + H(+)</text>
        <dbReference type="Rhea" id="RHEA:70363"/>
        <dbReference type="ChEBI" id="CHEBI:15377"/>
        <dbReference type="ChEBI" id="CHEBI:15378"/>
        <dbReference type="ChEBI" id="CHEBI:38028"/>
        <dbReference type="ChEBI" id="CHEBI:142864"/>
        <dbReference type="EC" id="3.5.2.15"/>
    </reaction>
</comment>
<comment type="activity regulation">
    <text evidence="1 2">Inhibited by barbituric acid.</text>
</comment>
<comment type="biophysicochemical properties">
    <kinetics>
        <KM evidence="3">58 uM for cyanuric acid</KM>
        <KM evidence="2">50 uM for cyanuric acid</KM>
        <text evidence="2 3">kcat is 14.2 sec(-1) with cyanuric acid as substrate (PubMed:22730121). kcat is 15000 min(-1) with cyanuric acid as substrate (PubMed:10427042).</text>
    </kinetics>
    <phDependence>
        <text evidence="2">Optimum pH is 8-8.5.</text>
    </phDependence>
    <temperatureDependence>
        <text evidence="2">Optimum temperature is 45-50 degrees Celsius.</text>
    </temperatureDependence>
</comment>
<comment type="pathway">
    <text evidence="1 5">Xenobiotic degradation; atrazine degradation; biuret from cyanurate: step 1/1.</text>
</comment>
<comment type="subunit">
    <text evidence="1 2">Homotetramer.</text>
</comment>
<comment type="domain">
    <text evidence="1">The monomer structure is formed from three repeating units (RUs) that share the same structure as one another. The monomer, the active site and substrate all possess threefold rotational symmetry, to the extent that the active site possesses three potential Ser-Lys catalytic dyads. It is possible that any or all of the three active-site serines may act as nucleophile (albeit only one can do so per catalytic cycle).</text>
</comment>
<comment type="similarity">
    <text evidence="1 4">Belongs to the cyclic amide hydrolase (CyAH) family.</text>
</comment>
<reference key="1">
    <citation type="journal article" date="1999" name="Appl. Environ. Microbiol.">
        <title>Gene sequence and properties of an s-triazine ring-cleavage enzyme from Pseudomonas sp. strain NRRLB-12227.</title>
        <authorList>
            <person name="Karns J.S."/>
        </authorList>
    </citation>
    <scope>NUCLEOTIDE SEQUENCE [GENOMIC DNA]</scope>
    <scope>PARTIAL PROTEIN SEQUENCE</scope>
    <scope>FUNCTION</scope>
    <scope>CATALYTIC ACTIVITY</scope>
    <scope>PATHWAY</scope>
    <scope>SUBUNIT</scope>
    <scope>ACTIVITY REGULATION</scope>
    <scope>BIOPHYSICOCHEMICAL PROPERTIES</scope>
    <source>
        <strain>strain A / NRRLB 12227</strain>
    </source>
</reference>
<reference key="2">
    <citation type="journal article" date="2012" name="J. Bacteriol.">
        <title>Defining sequence space and reaction products within the cyanuric acid hydrolase (AtzD)/barbiturase protein family.</title>
        <authorList>
            <person name="Seffernick J.L."/>
            <person name="Erickson J.S."/>
            <person name="Cameron S.M."/>
            <person name="Cho S."/>
            <person name="Dodge A.G."/>
            <person name="Richman J.E."/>
            <person name="Sadowsky M.J."/>
            <person name="Wackett L.P."/>
        </authorList>
    </citation>
    <scope>FUNCTION</scope>
    <scope>CATALYTIC ACTIVITY</scope>
    <scope>BIOPHYSICOCHEMICAL PROPERTIES</scope>
</reference>
<proteinExistence type="evidence at protein level"/>
<name>CAH_PSESP</name>
<accession>P0A3V5</accession>
<accession>O87589</accession>
<keyword id="KW-0903">Direct protein sequencing</keyword>
<keyword id="KW-0378">Hydrolase</keyword>
<keyword id="KW-0460">Magnesium</keyword>
<keyword id="KW-0479">Metal-binding</keyword>
<sequence>MQAQVFRVPMSNPADVSGVAKLIDEGVIRAEEVVCVLGKTEGNGCVNDFTRGYTTLAFKVYFSEKLGVSRQEVGERIAFIMSGGTEGVMAPHCTIFTVQKTDNKQKTAAEGKRLAVQQIFTREFLPEEIGRMPQVTETADAVRRAMREAGIADASDVHFVQVKCPLLTAGRMHDAVERGHTVATEDTYESMGYSRGASALGIALALGEVEKANLSDEVITADYSLYSSVASTSAGIELMNNEIIVMGNSRAWGGDLVIGHAEMKDAIDGAAVRQALRDVGCCENDLPTVDELGRVVNVFAKAEASPDGEVRNRRHTMLDDSDINSTRHARAVVNAVIASIVGDPMVYVSGGSEHQGPAGGGPVAVIARTA</sequence>
<feature type="chain" id="PRO_0000065649" description="Cyanuric acid amidohydrolase">
    <location>
        <begin position="1"/>
        <end position="370"/>
    </location>
</feature>
<feature type="region of interest" description="RU A" evidence="1">
    <location>
        <begin position="1"/>
        <end position="103"/>
    </location>
</feature>
<feature type="region of interest" description="RU B" evidence="1">
    <location>
        <begin position="113"/>
        <end position="250"/>
    </location>
</feature>
<feature type="region of interest" description="RU C" evidence="1">
    <location>
        <begin position="256"/>
        <end position="370"/>
    </location>
</feature>
<feature type="active site" evidence="1">
    <location>
        <position position="163"/>
    </location>
</feature>
<feature type="active site" description="Nucleophile" evidence="1">
    <location>
        <position position="233"/>
    </location>
</feature>
<feature type="binding site" evidence="1">
    <location>
        <position position="51"/>
    </location>
    <ligand>
        <name>substrate</name>
    </ligand>
</feature>
<feature type="binding site" evidence="1">
    <location>
        <begin position="82"/>
        <end position="83"/>
    </location>
    <ligand>
        <name>substrate</name>
    </ligand>
</feature>
<feature type="binding site" evidence="1">
    <location>
        <position position="195"/>
    </location>
    <ligand>
        <name>substrate</name>
    </ligand>
</feature>
<feature type="binding site" evidence="1">
    <location>
        <begin position="233"/>
        <end position="234"/>
    </location>
    <ligand>
        <name>substrate</name>
    </ligand>
</feature>
<feature type="binding site" evidence="1">
    <location>
        <position position="303"/>
    </location>
    <ligand>
        <name>Mg(2+)</name>
        <dbReference type="ChEBI" id="CHEBI:18420"/>
        <note>structural</note>
    </ligand>
</feature>
<feature type="binding site" evidence="1">
    <location>
        <position position="330"/>
    </location>
    <ligand>
        <name>substrate</name>
    </ligand>
</feature>
<feature type="binding site" evidence="1">
    <location>
        <begin position="349"/>
        <end position="350"/>
    </location>
    <ligand>
        <name>substrate</name>
    </ligand>
</feature>
<feature type="binding site" evidence="1">
    <location>
        <position position="352"/>
    </location>
    <ligand>
        <name>Mg(2+)</name>
        <dbReference type="ChEBI" id="CHEBI:18420"/>
        <note>structural</note>
    </ligand>
</feature>
<feature type="binding site" evidence="1">
    <location>
        <position position="355"/>
    </location>
    <ligand>
        <name>Mg(2+)</name>
        <dbReference type="ChEBI" id="CHEBI:18420"/>
        <note>structural</note>
    </ligand>
</feature>
<feature type="binding site" evidence="1">
    <location>
        <position position="356"/>
    </location>
    <ligand>
        <name>Mg(2+)</name>
        <dbReference type="ChEBI" id="CHEBI:18420"/>
        <note>structural</note>
    </ligand>
</feature>
<feature type="binding site" evidence="1">
    <location>
        <position position="357"/>
    </location>
    <ligand>
        <name>Mg(2+)</name>
        <dbReference type="ChEBI" id="CHEBI:18420"/>
        <note>structural</note>
    </ligand>
</feature>
<feature type="binding site" evidence="1">
    <location>
        <position position="360"/>
    </location>
    <ligand>
        <name>Mg(2+)</name>
        <dbReference type="ChEBI" id="CHEBI:18420"/>
        <note>structural</note>
    </ligand>
</feature>
<feature type="site" description="Important for substrate specificity" evidence="1">
    <location>
        <position position="326"/>
    </location>
</feature>
<organism>
    <name type="scientific">Pseudomonas sp</name>
    <dbReference type="NCBI Taxonomy" id="306"/>
    <lineage>
        <taxon>Bacteria</taxon>
        <taxon>Pseudomonadati</taxon>
        <taxon>Pseudomonadota</taxon>
        <taxon>Gammaproteobacteria</taxon>
        <taxon>Pseudomonadales</taxon>
        <taxon>Pseudomonadaceae</taxon>
        <taxon>Pseudomonas</taxon>
    </lineage>
</organism>